<comment type="function">
    <text evidence="1">Cell division factor that enhances FtsZ-ring assembly. Directly interacts with FtsZ and promotes bundling of FtsZ protofilaments, with a reduction in FtsZ GTPase activity.</text>
</comment>
<comment type="subunit">
    <text evidence="1">Interacts with FtsZ.</text>
</comment>
<comment type="subcellular location">
    <subcellularLocation>
        <location evidence="1">Cytoplasm</location>
    </subcellularLocation>
    <text evidence="1">Localizes to mid-cell in an FtsZ-dependent manner.</text>
</comment>
<comment type="similarity">
    <text evidence="1">Belongs to the ZapD family.</text>
</comment>
<name>ZAPD_IDILO</name>
<keyword id="KW-0131">Cell cycle</keyword>
<keyword id="KW-0132">Cell division</keyword>
<keyword id="KW-0963">Cytoplasm</keyword>
<keyword id="KW-1185">Reference proteome</keyword>
<keyword id="KW-0717">Septation</keyword>
<sequence length="254" mass="29821">MTSTDNDNILYEYPLQERMRTYLRLEHGFEQLKASRVCFDEQAEPFFNALFAVTELLERCDIRTELTKDLELDKQRLQKWEEHPDVDRDALQRTISEIEHCINTLQDIPKYLRQLKDDALLTSIRQRFSQPGMSGLFELPQLHLWLSQSAEEKQQQCERWSQTLALVELAITLKLTLLREQSVFAPIQLQNGFLQESSEQLLAMLRIKVPRSAKIYPVISGHRQRFTVRFMPLPGESKETSLHDIEFELARCSP</sequence>
<organism>
    <name type="scientific">Idiomarina loihiensis (strain ATCC BAA-735 / DSM 15497 / L2-TR)</name>
    <dbReference type="NCBI Taxonomy" id="283942"/>
    <lineage>
        <taxon>Bacteria</taxon>
        <taxon>Pseudomonadati</taxon>
        <taxon>Pseudomonadota</taxon>
        <taxon>Gammaproteobacteria</taxon>
        <taxon>Alteromonadales</taxon>
        <taxon>Idiomarinaceae</taxon>
        <taxon>Idiomarina</taxon>
    </lineage>
</organism>
<feature type="chain" id="PRO_0000211671" description="Cell division protein ZapD">
    <location>
        <begin position="1"/>
        <end position="254"/>
    </location>
</feature>
<evidence type="ECO:0000255" key="1">
    <source>
        <dbReference type="HAMAP-Rule" id="MF_01092"/>
    </source>
</evidence>
<dbReference type="EMBL" id="AE017340">
    <property type="protein sequence ID" value="AAV81291.1"/>
    <property type="molecule type" value="Genomic_DNA"/>
</dbReference>
<dbReference type="RefSeq" id="WP_011233709.1">
    <property type="nucleotide sequence ID" value="NC_006512.1"/>
</dbReference>
<dbReference type="SMR" id="Q5R0N4"/>
<dbReference type="STRING" id="283942.IL0448"/>
<dbReference type="GeneID" id="41335600"/>
<dbReference type="KEGG" id="ilo:IL0448"/>
<dbReference type="eggNOG" id="COG4582">
    <property type="taxonomic scope" value="Bacteria"/>
</dbReference>
<dbReference type="HOGENOM" id="CLU_076303_0_0_6"/>
<dbReference type="OrthoDB" id="5294622at2"/>
<dbReference type="Proteomes" id="UP000001171">
    <property type="component" value="Chromosome"/>
</dbReference>
<dbReference type="GO" id="GO:0032153">
    <property type="term" value="C:cell division site"/>
    <property type="evidence" value="ECO:0007669"/>
    <property type="project" value="TreeGrafter"/>
</dbReference>
<dbReference type="GO" id="GO:0005737">
    <property type="term" value="C:cytoplasm"/>
    <property type="evidence" value="ECO:0007669"/>
    <property type="project" value="UniProtKB-SubCell"/>
</dbReference>
<dbReference type="GO" id="GO:0000917">
    <property type="term" value="P:division septum assembly"/>
    <property type="evidence" value="ECO:0007669"/>
    <property type="project" value="UniProtKB-KW"/>
</dbReference>
<dbReference type="GO" id="GO:0043093">
    <property type="term" value="P:FtsZ-dependent cytokinesis"/>
    <property type="evidence" value="ECO:0007669"/>
    <property type="project" value="UniProtKB-UniRule"/>
</dbReference>
<dbReference type="Gene3D" id="1.10.3900.10">
    <property type="entry name" value="YacF-like"/>
    <property type="match status" value="1"/>
</dbReference>
<dbReference type="Gene3D" id="2.60.440.10">
    <property type="entry name" value="YacF-like domains"/>
    <property type="match status" value="1"/>
</dbReference>
<dbReference type="HAMAP" id="MF_01092">
    <property type="entry name" value="ZapD"/>
    <property type="match status" value="1"/>
</dbReference>
<dbReference type="InterPro" id="IPR009777">
    <property type="entry name" value="ZapD"/>
</dbReference>
<dbReference type="InterPro" id="IPR027462">
    <property type="entry name" value="ZapD_C"/>
</dbReference>
<dbReference type="InterPro" id="IPR036268">
    <property type="entry name" value="ZapD_sf"/>
</dbReference>
<dbReference type="NCBIfam" id="NF003655">
    <property type="entry name" value="PRK05287.1-3"/>
    <property type="match status" value="1"/>
</dbReference>
<dbReference type="PANTHER" id="PTHR39455">
    <property type="entry name" value="CELL DIVISION PROTEIN ZAPD"/>
    <property type="match status" value="1"/>
</dbReference>
<dbReference type="PANTHER" id="PTHR39455:SF1">
    <property type="entry name" value="CELL DIVISION PROTEIN ZAPD"/>
    <property type="match status" value="1"/>
</dbReference>
<dbReference type="Pfam" id="PF07072">
    <property type="entry name" value="ZapD"/>
    <property type="match status" value="1"/>
</dbReference>
<dbReference type="SUPFAM" id="SSF160950">
    <property type="entry name" value="YacF-like"/>
    <property type="match status" value="1"/>
</dbReference>
<reference key="1">
    <citation type="journal article" date="2004" name="Proc. Natl. Acad. Sci. U.S.A.">
        <title>Genome sequence of the deep-sea gamma-proteobacterium Idiomarina loihiensis reveals amino acid fermentation as a source of carbon and energy.</title>
        <authorList>
            <person name="Hou S."/>
            <person name="Saw J.H."/>
            <person name="Lee K.S."/>
            <person name="Freitas T.A."/>
            <person name="Belisle C."/>
            <person name="Kawarabayasi Y."/>
            <person name="Donachie S.P."/>
            <person name="Pikina A."/>
            <person name="Galperin M.Y."/>
            <person name="Koonin E.V."/>
            <person name="Makarova K.S."/>
            <person name="Omelchenko M.V."/>
            <person name="Sorokin A."/>
            <person name="Wolf Y.I."/>
            <person name="Li Q.X."/>
            <person name="Keum Y.S."/>
            <person name="Campbell S."/>
            <person name="Denery J."/>
            <person name="Aizawa S."/>
            <person name="Shibata S."/>
            <person name="Malahoff A."/>
            <person name="Alam M."/>
        </authorList>
    </citation>
    <scope>NUCLEOTIDE SEQUENCE [LARGE SCALE GENOMIC DNA]</scope>
    <source>
        <strain>ATCC BAA-735 / DSM 15497 / L2-TR</strain>
    </source>
</reference>
<gene>
    <name evidence="1" type="primary">zapD</name>
    <name type="ordered locus">IL0448</name>
</gene>
<proteinExistence type="inferred from homology"/>
<protein>
    <recommendedName>
        <fullName evidence="1">Cell division protein ZapD</fullName>
    </recommendedName>
    <alternativeName>
        <fullName evidence="1">Z ring-associated protein D</fullName>
    </alternativeName>
</protein>
<accession>Q5R0N4</accession>